<dbReference type="EC" id="3.6.1.-" evidence="1"/>
<dbReference type="EMBL" id="BC083650">
    <property type="protein sequence ID" value="AAH83650.1"/>
    <property type="molecule type" value="mRNA"/>
</dbReference>
<dbReference type="RefSeq" id="NP_001005905.1">
    <property type="nucleotide sequence ID" value="NM_001005905.1"/>
</dbReference>
<dbReference type="SMR" id="Q5XIM9"/>
<dbReference type="BioGRID" id="256339">
    <property type="interactions" value="4"/>
</dbReference>
<dbReference type="FunCoup" id="Q5XIM9">
    <property type="interactions" value="4330"/>
</dbReference>
<dbReference type="IntAct" id="Q5XIM9">
    <property type="interactions" value="5"/>
</dbReference>
<dbReference type="MINT" id="Q5XIM9"/>
<dbReference type="STRING" id="10116.ENSRNOP00000029234"/>
<dbReference type="GlyGen" id="Q5XIM9">
    <property type="glycosylation" value="1 site, 1 O-linked glycan (1 site)"/>
</dbReference>
<dbReference type="iPTMnet" id="Q5XIM9"/>
<dbReference type="PhosphoSitePlus" id="Q5XIM9"/>
<dbReference type="jPOST" id="Q5XIM9"/>
<dbReference type="PaxDb" id="10116-ENSRNOP00000029234"/>
<dbReference type="Ensembl" id="ENSRNOT00000037946.6">
    <property type="protein sequence ID" value="ENSRNOP00000029234.4"/>
    <property type="gene ID" value="ENSRNOG00000021317.6"/>
</dbReference>
<dbReference type="GeneID" id="299809"/>
<dbReference type="KEGG" id="rno:299809"/>
<dbReference type="UCSC" id="RGD:1359143">
    <property type="organism name" value="rat"/>
</dbReference>
<dbReference type="AGR" id="RGD:1359143"/>
<dbReference type="CTD" id="10576"/>
<dbReference type="RGD" id="1359143">
    <property type="gene designation" value="Cct2"/>
</dbReference>
<dbReference type="eggNOG" id="KOG0363">
    <property type="taxonomic scope" value="Eukaryota"/>
</dbReference>
<dbReference type="GeneTree" id="ENSGT00550000074930"/>
<dbReference type="HOGENOM" id="CLU_008891_6_2_1"/>
<dbReference type="InParanoid" id="Q5XIM9"/>
<dbReference type="PhylomeDB" id="Q5XIM9"/>
<dbReference type="TreeFam" id="TF105645"/>
<dbReference type="BRENDA" id="3.6.4.B10">
    <property type="organism ID" value="5301"/>
</dbReference>
<dbReference type="Reactome" id="R-RNO-390471">
    <property type="pathway name" value="Association of TriC/CCT with target proteins during biosynthesis"/>
</dbReference>
<dbReference type="Reactome" id="R-RNO-6798695">
    <property type="pathway name" value="Neutrophil degranulation"/>
</dbReference>
<dbReference type="Reactome" id="R-RNO-6814122">
    <property type="pathway name" value="Cooperation of PDCL (PhLP1) and TRiC/CCT in G-protein beta folding"/>
</dbReference>
<dbReference type="Reactome" id="R-RNO-9013418">
    <property type="pathway name" value="RHOBTB2 GTPase cycle"/>
</dbReference>
<dbReference type="Reactome" id="R-RNO-9013422">
    <property type="pathway name" value="RHOBTB1 GTPase cycle"/>
</dbReference>
<dbReference type="PRO" id="PR:Q5XIM9"/>
<dbReference type="Proteomes" id="UP000002494">
    <property type="component" value="Chromosome 7"/>
</dbReference>
<dbReference type="Bgee" id="ENSRNOG00000021317">
    <property type="expression patterns" value="Expressed in thymus and 20 other cell types or tissues"/>
</dbReference>
<dbReference type="GO" id="GO:0044297">
    <property type="term" value="C:cell body"/>
    <property type="evidence" value="ECO:0000266"/>
    <property type="project" value="RGD"/>
</dbReference>
<dbReference type="GO" id="GO:0005832">
    <property type="term" value="C:chaperonin-containing T-complex"/>
    <property type="evidence" value="ECO:0000250"/>
    <property type="project" value="UniProtKB"/>
</dbReference>
<dbReference type="GO" id="GO:0005874">
    <property type="term" value="C:microtubule"/>
    <property type="evidence" value="ECO:0000266"/>
    <property type="project" value="RGD"/>
</dbReference>
<dbReference type="GO" id="GO:0002199">
    <property type="term" value="C:zona pellucida receptor complex"/>
    <property type="evidence" value="ECO:0000266"/>
    <property type="project" value="RGD"/>
</dbReference>
<dbReference type="GO" id="GO:0005524">
    <property type="term" value="F:ATP binding"/>
    <property type="evidence" value="ECO:0007669"/>
    <property type="project" value="UniProtKB-KW"/>
</dbReference>
<dbReference type="GO" id="GO:0016887">
    <property type="term" value="F:ATP hydrolysis activity"/>
    <property type="evidence" value="ECO:0007669"/>
    <property type="project" value="InterPro"/>
</dbReference>
<dbReference type="GO" id="GO:0140662">
    <property type="term" value="F:ATP-dependent protein folding chaperone"/>
    <property type="evidence" value="ECO:0007669"/>
    <property type="project" value="InterPro"/>
</dbReference>
<dbReference type="GO" id="GO:0044183">
    <property type="term" value="F:protein folding chaperone"/>
    <property type="evidence" value="ECO:0000266"/>
    <property type="project" value="RGD"/>
</dbReference>
<dbReference type="GO" id="GO:0031625">
    <property type="term" value="F:ubiquitin protein ligase binding"/>
    <property type="evidence" value="ECO:0000266"/>
    <property type="project" value="RGD"/>
</dbReference>
<dbReference type="GO" id="GO:0051082">
    <property type="term" value="F:unfolded protein binding"/>
    <property type="evidence" value="ECO:0000318"/>
    <property type="project" value="GO_Central"/>
</dbReference>
<dbReference type="GO" id="GO:0007339">
    <property type="term" value="P:binding of sperm to zona pellucida"/>
    <property type="evidence" value="ECO:0000266"/>
    <property type="project" value="RGD"/>
</dbReference>
<dbReference type="GO" id="GO:0051086">
    <property type="term" value="P:chaperone mediated protein folding independent of cofactor"/>
    <property type="evidence" value="ECO:0000266"/>
    <property type="project" value="RGD"/>
</dbReference>
<dbReference type="GO" id="GO:0051131">
    <property type="term" value="P:chaperone-mediated protein complex assembly"/>
    <property type="evidence" value="ECO:0000266"/>
    <property type="project" value="RGD"/>
</dbReference>
<dbReference type="GO" id="GO:0061077">
    <property type="term" value="P:chaperone-mediated protein folding"/>
    <property type="evidence" value="ECO:0000266"/>
    <property type="project" value="RGD"/>
</dbReference>
<dbReference type="GO" id="GO:1904874">
    <property type="term" value="P:positive regulation of telomerase RNA localization to Cajal body"/>
    <property type="evidence" value="ECO:0000266"/>
    <property type="project" value="RGD"/>
</dbReference>
<dbReference type="GO" id="GO:0032212">
    <property type="term" value="P:positive regulation of telomere maintenance via telomerase"/>
    <property type="evidence" value="ECO:0000266"/>
    <property type="project" value="RGD"/>
</dbReference>
<dbReference type="GO" id="GO:0006457">
    <property type="term" value="P:protein folding"/>
    <property type="evidence" value="ECO:0000266"/>
    <property type="project" value="RGD"/>
</dbReference>
<dbReference type="GO" id="GO:0050821">
    <property type="term" value="P:protein stabilization"/>
    <property type="evidence" value="ECO:0000266"/>
    <property type="project" value="RGD"/>
</dbReference>
<dbReference type="GO" id="GO:0090666">
    <property type="term" value="P:scaRNA localization to Cajal body"/>
    <property type="evidence" value="ECO:0000266"/>
    <property type="project" value="RGD"/>
</dbReference>
<dbReference type="CDD" id="cd03336">
    <property type="entry name" value="TCP1_beta"/>
    <property type="match status" value="1"/>
</dbReference>
<dbReference type="FunFam" id="3.30.260.10:FF:000046">
    <property type="entry name" value="Chaperonin containing TCP1 subunit 2"/>
    <property type="match status" value="1"/>
</dbReference>
<dbReference type="FunFam" id="3.50.7.10:FF:000002">
    <property type="entry name" value="T-complex protein 1 subunit beta"/>
    <property type="match status" value="1"/>
</dbReference>
<dbReference type="FunFam" id="1.10.560.10:FF:000017">
    <property type="entry name" value="T-complex protein 1 subunit eta"/>
    <property type="match status" value="1"/>
</dbReference>
<dbReference type="FunFam" id="1.10.560.10:FF:000045">
    <property type="entry name" value="T-complex protein 1 subunit eta"/>
    <property type="match status" value="1"/>
</dbReference>
<dbReference type="Gene3D" id="3.50.7.10">
    <property type="entry name" value="GroEL"/>
    <property type="match status" value="1"/>
</dbReference>
<dbReference type="Gene3D" id="1.10.560.10">
    <property type="entry name" value="GroEL-like equatorial domain"/>
    <property type="match status" value="1"/>
</dbReference>
<dbReference type="Gene3D" id="3.30.260.10">
    <property type="entry name" value="TCP-1-like chaperonin intermediate domain"/>
    <property type="match status" value="1"/>
</dbReference>
<dbReference type="InterPro" id="IPR012716">
    <property type="entry name" value="Chap_CCT_beta"/>
</dbReference>
<dbReference type="InterPro" id="IPR017998">
    <property type="entry name" value="Chaperone_TCP-1"/>
</dbReference>
<dbReference type="InterPro" id="IPR002194">
    <property type="entry name" value="Chaperonin_TCP-1_CS"/>
</dbReference>
<dbReference type="InterPro" id="IPR002423">
    <property type="entry name" value="Cpn60/GroEL/TCP-1"/>
</dbReference>
<dbReference type="InterPro" id="IPR027409">
    <property type="entry name" value="GroEL-like_apical_dom_sf"/>
</dbReference>
<dbReference type="InterPro" id="IPR027413">
    <property type="entry name" value="GROEL-like_equatorial_sf"/>
</dbReference>
<dbReference type="InterPro" id="IPR027410">
    <property type="entry name" value="TCP-1-like_intermed_sf"/>
</dbReference>
<dbReference type="InterPro" id="IPR053374">
    <property type="entry name" value="TCP-1_chaperonin"/>
</dbReference>
<dbReference type="NCBIfam" id="TIGR02341">
    <property type="entry name" value="chap_CCT_beta"/>
    <property type="match status" value="1"/>
</dbReference>
<dbReference type="NCBIfam" id="NF041083">
    <property type="entry name" value="thermosome_beta"/>
    <property type="match status" value="1"/>
</dbReference>
<dbReference type="PANTHER" id="PTHR11353">
    <property type="entry name" value="CHAPERONIN"/>
    <property type="match status" value="1"/>
</dbReference>
<dbReference type="Pfam" id="PF00118">
    <property type="entry name" value="Cpn60_TCP1"/>
    <property type="match status" value="1"/>
</dbReference>
<dbReference type="PRINTS" id="PR00304">
    <property type="entry name" value="TCOMPLEXTCP1"/>
</dbReference>
<dbReference type="SUPFAM" id="SSF52029">
    <property type="entry name" value="GroEL apical domain-like"/>
    <property type="match status" value="1"/>
</dbReference>
<dbReference type="SUPFAM" id="SSF48592">
    <property type="entry name" value="GroEL equatorial domain-like"/>
    <property type="match status" value="1"/>
</dbReference>
<dbReference type="SUPFAM" id="SSF54849">
    <property type="entry name" value="GroEL-intermediate domain like"/>
    <property type="match status" value="1"/>
</dbReference>
<dbReference type="PROSITE" id="PS00750">
    <property type="entry name" value="TCP1_1"/>
    <property type="match status" value="1"/>
</dbReference>
<dbReference type="PROSITE" id="PS00751">
    <property type="entry name" value="TCP1_2"/>
    <property type="match status" value="1"/>
</dbReference>
<dbReference type="PROSITE" id="PS00995">
    <property type="entry name" value="TCP1_3"/>
    <property type="match status" value="1"/>
</dbReference>
<sequence length="535" mass="57458">MASLSLAPVNIFKAGADEERAETARLSSFIGAIAIGDLVKSTLGPKGMDKILLSSGRDASLMVTNDGATILKNIGVDNPAAKVLVDMSRVQDDEVGDGTTSVTVLAAELLREAESLIAKKIHPQTIIAGWREATKAAREALLSSAVDHGSDEVKFWQDLMNIAGTTLSSKLLTHHKDHFTKLAVEAVLRLKGSGNLEAIHVIKKLGGSLADSYLDEGFLLDKKIGVNQPKRIENAKILIANTGMDTDKIKIFGSRVRVDSTAKVAEIEHAEKEKMKEKVERILKHGINCFINRQLIYNYPEQLFGAAGVMAIEHADFAGVERLALVTGGEIASTFDHPELVKLGSCKLIEEVMIGEDKLIHFSGVALGEACTIVLRGATQQILDEAERSLHDALCVLAQTVKDPRTVYGGGCSEMLMAHAVTMLASRTPGKEAVAMESFAKALRMLPTIIADNAGYDSADLVAQLRAAHSEGRITAGLDMKEGSIGDMAVLGITESFQVKRQVLLSAAEAAEVILRVDNIIKAAPRKRVPDHHPC</sequence>
<feature type="initiator methionine" description="Removed" evidence="1">
    <location>
        <position position="1"/>
    </location>
</feature>
<feature type="chain" id="PRO_0000271368" description="T-complex protein 1 subunit beta">
    <location>
        <begin position="2"/>
        <end position="535"/>
    </location>
</feature>
<feature type="binding site" evidence="1">
    <location>
        <position position="44"/>
    </location>
    <ligand>
        <name>ADP</name>
        <dbReference type="ChEBI" id="CHEBI:456216"/>
    </ligand>
</feature>
<feature type="binding site" evidence="1">
    <location>
        <position position="44"/>
    </location>
    <ligand>
        <name>ATP</name>
        <dbReference type="ChEBI" id="CHEBI:30616"/>
    </ligand>
</feature>
<feature type="binding site" evidence="1">
    <location>
        <position position="97"/>
    </location>
    <ligand>
        <name>Mg(2+)</name>
        <dbReference type="ChEBI" id="CHEBI:18420"/>
    </ligand>
</feature>
<feature type="binding site" evidence="1">
    <location>
        <position position="98"/>
    </location>
    <ligand>
        <name>ADP</name>
        <dbReference type="ChEBI" id="CHEBI:456216"/>
    </ligand>
</feature>
<feature type="binding site" evidence="1">
    <location>
        <position position="98"/>
    </location>
    <ligand>
        <name>ATP</name>
        <dbReference type="ChEBI" id="CHEBI:30616"/>
    </ligand>
</feature>
<feature type="binding site" evidence="1">
    <location>
        <position position="99"/>
    </location>
    <ligand>
        <name>ADP</name>
        <dbReference type="ChEBI" id="CHEBI:456216"/>
    </ligand>
</feature>
<feature type="binding site" evidence="1">
    <location>
        <position position="99"/>
    </location>
    <ligand>
        <name>ATP</name>
        <dbReference type="ChEBI" id="CHEBI:30616"/>
    </ligand>
</feature>
<feature type="binding site" evidence="1">
    <location>
        <position position="100"/>
    </location>
    <ligand>
        <name>ADP</name>
        <dbReference type="ChEBI" id="CHEBI:456216"/>
    </ligand>
</feature>
<feature type="binding site" evidence="1">
    <location>
        <position position="100"/>
    </location>
    <ligand>
        <name>ATP</name>
        <dbReference type="ChEBI" id="CHEBI:30616"/>
    </ligand>
</feature>
<feature type="binding site" evidence="1">
    <location>
        <position position="101"/>
    </location>
    <ligand>
        <name>ADP</name>
        <dbReference type="ChEBI" id="CHEBI:456216"/>
    </ligand>
</feature>
<feature type="binding site" evidence="1">
    <location>
        <position position="168"/>
    </location>
    <ligand>
        <name>ADP</name>
        <dbReference type="ChEBI" id="CHEBI:456216"/>
    </ligand>
</feature>
<feature type="binding site" evidence="1">
    <location>
        <position position="169"/>
    </location>
    <ligand>
        <name>ADP</name>
        <dbReference type="ChEBI" id="CHEBI:456216"/>
    </ligand>
</feature>
<feature type="binding site" evidence="1">
    <location>
        <position position="410"/>
    </location>
    <ligand>
        <name>ADP</name>
        <dbReference type="ChEBI" id="CHEBI:456216"/>
    </ligand>
</feature>
<feature type="binding site" evidence="1">
    <location>
        <position position="495"/>
    </location>
    <ligand>
        <name>ADP</name>
        <dbReference type="ChEBI" id="CHEBI:456216"/>
    </ligand>
</feature>
<feature type="binding site" evidence="1">
    <location>
        <position position="495"/>
    </location>
    <ligand>
        <name>ATP</name>
        <dbReference type="ChEBI" id="CHEBI:30616"/>
    </ligand>
</feature>
<feature type="binding site" evidence="1">
    <location>
        <position position="500"/>
    </location>
    <ligand>
        <name>ADP</name>
        <dbReference type="ChEBI" id="CHEBI:456216"/>
    </ligand>
</feature>
<feature type="binding site" evidence="1">
    <location>
        <position position="500"/>
    </location>
    <ligand>
        <name>ATP</name>
        <dbReference type="ChEBI" id="CHEBI:30616"/>
    </ligand>
</feature>
<feature type="modified residue" description="N-acetylalanine" evidence="1">
    <location>
        <position position="2"/>
    </location>
</feature>
<feature type="modified residue" description="Phosphoserine" evidence="1">
    <location>
        <position position="3"/>
    </location>
</feature>
<feature type="modified residue" description="N6-acetyllysine" evidence="1">
    <location>
        <position position="13"/>
    </location>
</feature>
<feature type="modified residue" description="Phosphoserine" evidence="1">
    <location>
        <position position="60"/>
    </location>
</feature>
<feature type="modified residue" description="N6-acetyllysine" evidence="1">
    <location>
        <position position="154"/>
    </location>
</feature>
<feature type="modified residue" description="N6-acetyllysine" evidence="1">
    <location>
        <position position="181"/>
    </location>
</feature>
<feature type="modified residue" description="Phosphoserine" evidence="1">
    <location>
        <position position="260"/>
    </location>
</feature>
<feature type="modified residue" description="Phosphothreonine" evidence="1">
    <location>
        <position position="261"/>
    </location>
</feature>
<feature type="cross-link" description="Glycyl lysine isopeptide (Lys-Gly) (interchain with G-Cter in SUMO2)" evidence="1">
    <location>
        <position position="248"/>
    </location>
</feature>
<keyword id="KW-0007">Acetylation</keyword>
<keyword id="KW-0067">ATP-binding</keyword>
<keyword id="KW-0143">Chaperone</keyword>
<keyword id="KW-0963">Cytoplasm</keyword>
<keyword id="KW-0903">Direct protein sequencing</keyword>
<keyword id="KW-0378">Hydrolase</keyword>
<keyword id="KW-1017">Isopeptide bond</keyword>
<keyword id="KW-0460">Magnesium</keyword>
<keyword id="KW-0479">Metal-binding</keyword>
<keyword id="KW-0547">Nucleotide-binding</keyword>
<keyword id="KW-0597">Phosphoprotein</keyword>
<keyword id="KW-1185">Reference proteome</keyword>
<keyword id="KW-0832">Ubl conjugation</keyword>
<reference key="1">
    <citation type="journal article" date="2004" name="Genome Res.">
        <title>The status, quality, and expansion of the NIH full-length cDNA project: the Mammalian Gene Collection (MGC).</title>
        <authorList>
            <consortium name="The MGC Project Team"/>
        </authorList>
    </citation>
    <scope>NUCLEOTIDE SEQUENCE [LARGE SCALE MRNA]</scope>
    <source>
        <tissue>Testis</tissue>
    </source>
</reference>
<reference key="2">
    <citation type="submission" date="2007-04" db="UniProtKB">
        <authorList>
            <person name="Lubec G."/>
            <person name="Afjehi-Sadat L."/>
            <person name="Chen W.-Q."/>
        </authorList>
    </citation>
    <scope>PROTEIN SEQUENCE OF 26-40; 120-131; 205-223; 323-342; 359-376 AND 502-516</scope>
    <scope>IDENTIFICATION BY MASS SPECTROMETRY</scope>
    <source>
        <strain>Sprague-Dawley</strain>
        <tissue>Hippocampus</tissue>
        <tissue>Spinal cord</tissue>
    </source>
</reference>
<name>TCPB_RAT</name>
<protein>
    <recommendedName>
        <fullName>T-complex protein 1 subunit beta</fullName>
        <shortName>TCP-1-beta</shortName>
        <ecNumber evidence="1">3.6.1.-</ecNumber>
    </recommendedName>
    <alternativeName>
        <fullName>CCT-beta</fullName>
    </alternativeName>
</protein>
<accession>Q5XIM9</accession>
<organism>
    <name type="scientific">Rattus norvegicus</name>
    <name type="common">Rat</name>
    <dbReference type="NCBI Taxonomy" id="10116"/>
    <lineage>
        <taxon>Eukaryota</taxon>
        <taxon>Metazoa</taxon>
        <taxon>Chordata</taxon>
        <taxon>Craniata</taxon>
        <taxon>Vertebrata</taxon>
        <taxon>Euteleostomi</taxon>
        <taxon>Mammalia</taxon>
        <taxon>Eutheria</taxon>
        <taxon>Euarchontoglires</taxon>
        <taxon>Glires</taxon>
        <taxon>Rodentia</taxon>
        <taxon>Myomorpha</taxon>
        <taxon>Muroidea</taxon>
        <taxon>Muridae</taxon>
        <taxon>Murinae</taxon>
        <taxon>Rattus</taxon>
    </lineage>
</organism>
<evidence type="ECO:0000250" key="1">
    <source>
        <dbReference type="UniProtKB" id="P78371"/>
    </source>
</evidence>
<evidence type="ECO:0000250" key="2">
    <source>
        <dbReference type="UniProtKB" id="P80314"/>
    </source>
</evidence>
<evidence type="ECO:0000305" key="3"/>
<gene>
    <name type="primary">Cct2</name>
    <name type="synonym">Cctb</name>
</gene>
<comment type="function">
    <text evidence="1">Component of the chaperonin-containing T-complex (TRiC), a molecular chaperone complex that assists the folding of actin, tubulin and other proteins upon ATP hydrolysis. The TRiC complex mediates the folding of WRAP53/TCAB1, thereby regulating telomere maintenance. As part of the TRiC complex may play a role in the assembly of BBSome, a complex involved in ciliogenesis regulating transports vesicles to the cilia.</text>
</comment>
<comment type="catalytic activity">
    <reaction evidence="1">
        <text>ATP + H2O = ADP + phosphate + H(+)</text>
        <dbReference type="Rhea" id="RHEA:13065"/>
        <dbReference type="ChEBI" id="CHEBI:15377"/>
        <dbReference type="ChEBI" id="CHEBI:15378"/>
        <dbReference type="ChEBI" id="CHEBI:30616"/>
        <dbReference type="ChEBI" id="CHEBI:43474"/>
        <dbReference type="ChEBI" id="CHEBI:456216"/>
    </reaction>
</comment>
<comment type="subunit">
    <text evidence="1 2">Component of the chaperonin-containing T-complex (TRiC), a hexadecamer composed of two identical back-to-back stacked rings enclosing a protein folding chamber. Each ring is made up of eight different subunits: TCP1/CCT1, CCT2, CCT3, CCT4, CCT5, CCT6A/CCT6, CCT7, CCT8. Interacts with PACRG. Interacts with FLCN. Interacts with DLEC1 (By similarity). Interacts with SVEP1 (By similarity).</text>
</comment>
<comment type="subcellular location">
    <subcellularLocation>
        <location evidence="1">Cytoplasm</location>
    </subcellularLocation>
</comment>
<comment type="similarity">
    <text evidence="3">Belongs to the TCP-1 chaperonin family.</text>
</comment>
<proteinExistence type="evidence at protein level"/>